<sequence>MHRLIFVYTLICANFCSCRDTSATPQSASIKALRNANLRRDESNHLTDLYRRDETIQVKGNGYVQSPRFPNSYPRNLLLTWRLHSQENTRIQLVFDNQFGLEEAENDICRYDFVEVEDISETSTIIRGRWCGHKEVPPRIKSRTNQIKITFKSDDYFVAKPGFKIYYSLLEDFQPAAASETNWESVTSSISGVSYNSPSVTDPTLIADALDKKIAEFDTVEDLLKYFNPESWQEDLENMYLDTPRYRGRSYHDRKSKVDLDRLNDDAKRYSCTPRNYSVNIREELKLANVVFFPRCLLVQRCGGNCGCGTVNWRSCTCNSGKTVKKYHEVLQFEPGHIKRRGRAKTMALVDIQLDHHERCDCICSSRPPR</sequence>
<feature type="signal peptide" evidence="2">
    <location>
        <begin position="1"/>
        <end position="18"/>
    </location>
</feature>
<feature type="chain" id="PRO_0000250188" description="Platelet-derived growth factor D, latent form">
    <location>
        <begin position="19"/>
        <end position="370"/>
    </location>
</feature>
<feature type="chain" id="PRO_0000250189" description="Platelet-derived growth factor D, receptor-binding form" evidence="2">
    <location>
        <begin position="250"/>
        <end position="370"/>
    </location>
</feature>
<feature type="domain" description="CUB" evidence="3">
    <location>
        <begin position="52"/>
        <end position="170"/>
    </location>
</feature>
<feature type="site" description="Cleavage" evidence="2">
    <location>
        <begin position="247"/>
        <end position="248"/>
    </location>
</feature>
<feature type="site" description="Cleavage" evidence="2">
    <location>
        <begin position="249"/>
        <end position="250"/>
    </location>
</feature>
<feature type="glycosylation site" description="N-linked (GlcNAc...) asparagine" evidence="2">
    <location>
        <position position="276"/>
    </location>
</feature>
<feature type="disulfide bond" evidence="3">
    <location>
        <begin position="109"/>
        <end position="131"/>
    </location>
</feature>
<feature type="disulfide bond" description="Interchain" evidence="3">
    <location>
        <position position="296"/>
    </location>
</feature>
<feature type="disulfide bond" evidence="3">
    <location>
        <begin position="302"/>
        <end position="360"/>
    </location>
</feature>
<feature type="disulfide bond" evidence="3">
    <location>
        <begin position="306"/>
        <end position="362"/>
    </location>
</feature>
<feature type="splice variant" id="VSP_020615" description="In isoform 2." evidence="13 14 15 16">
    <location>
        <begin position="42"/>
        <end position="47"/>
    </location>
</feature>
<feature type="sequence variant" id="VAR_051563" description="In dbSNP:rs35045740.">
    <original>I</original>
    <variation>V</variation>
    <location>
        <position position="190"/>
    </location>
</feature>
<feature type="sequence variant" id="VAR_036418" description="In a colorectal cancer sample; somatic mutation." evidence="12">
    <original>D</original>
    <variation>Y</variation>
    <location>
        <position position="202"/>
    </location>
</feature>
<feature type="mutagenesis site" description="Abolishes cleavage into active form; when associated with A-249." evidence="11">
    <original>R</original>
    <variation>A</variation>
    <location>
        <position position="247"/>
    </location>
</feature>
<feature type="mutagenesis site" description="Abolishes cleavage into active form; when associated with A-247." evidence="11">
    <original>R</original>
    <variation>A</variation>
    <location>
        <position position="249"/>
    </location>
</feature>
<gene>
    <name type="primary">PDGFD</name>
    <name type="synonym">IEGF</name>
    <name type="synonym">SCDGFB</name>
    <name type="ORF">MSTP036</name>
    <name type="ORF">UNQ1899/PRO4345</name>
</gene>
<reference key="1">
    <citation type="journal article" date="2001" name="Biochem. Biophys. Res. Commun.">
        <title>Molecular cloning of SCDGF-B, a novel growth factor homologous to SCDGF/PDGF-C/fallotein.</title>
        <authorList>
            <person name="Hamada T."/>
            <person name="Ui-Tei K."/>
            <person name="Imaki J."/>
            <person name="Miyata Y."/>
        </authorList>
    </citation>
    <scope>NUCLEOTIDE SEQUENCE [MRNA] (ISOFORMS 1 AND 2)</scope>
</reference>
<reference key="2">
    <citation type="journal article" date="2001" name="Nat. Cell Biol.">
        <title>PDGF-D is a specific, protease-activated ligand for the PDGF beta-receptor.</title>
        <authorList>
            <person name="Bergsten E."/>
            <person name="Uutela M."/>
            <person name="Li X."/>
            <person name="Pietras K."/>
            <person name="Oestman A."/>
            <person name="Heldin C.-H."/>
            <person name="Alitalo K."/>
            <person name="Eriksson U."/>
        </authorList>
    </citation>
    <scope>NUCLEOTIDE SEQUENCE [MRNA] (ISOFORM 1)</scope>
    <scope>FUNCTION</scope>
    <scope>SUBUNIT</scope>
    <scope>TISSUE SPECIFICITY</scope>
</reference>
<reference key="3">
    <citation type="journal article" date="2001" name="Nat. Cell Biol.">
        <title>PDGF D, a novel protease-activated growth factor.</title>
        <authorList>
            <person name="LaRochelle W.J."/>
            <person name="Jeffers M."/>
            <person name="McDonald W.F."/>
            <person name="Chillakuru R.A."/>
            <person name="Giese N.A."/>
            <person name="Lokker N.A."/>
            <person name="Sullivan C."/>
            <person name="Boldog F.L."/>
            <person name="Yang M."/>
            <person name="Vernet C."/>
            <person name="Burgess C.E."/>
            <person name="Fernandez E."/>
            <person name="Deegler L.L."/>
            <person name="Rittman B."/>
            <person name="Shimkets J."/>
            <person name="Shimkets R.A."/>
            <person name="Rothberg J.M."/>
            <person name="Lichenstein H.S."/>
        </authorList>
    </citation>
    <scope>NUCLEOTIDE SEQUENCE [MRNA] (ISOFORM 1)</scope>
    <scope>SUBUNIT</scope>
    <scope>SUBCELLULAR LOCATION</scope>
    <scope>TISSUE SPECIFICITY</scope>
</reference>
<reference key="4">
    <citation type="journal article" date="2002" name="Mol. Vis.">
        <title>Expressed sequence tag analysis of adult human iris for the NEIBank project: steroid-response factors and similarities with retinal pigment epithelium.</title>
        <authorList>
            <person name="Wistow G."/>
            <person name="Bernstein S.L."/>
            <person name="Ray S."/>
            <person name="Wyatt M.K."/>
            <person name="Behal A."/>
            <person name="Touchman J.W."/>
            <person name="Bouffard G."/>
            <person name="Smith D."/>
            <person name="Peterson K."/>
        </authorList>
    </citation>
    <scope>NUCLEOTIDE SEQUENCE [MRNA] (ISOFORMS 1 AND 2)</scope>
    <source>
        <tissue>Iris</tissue>
    </source>
</reference>
<reference key="5">
    <citation type="submission" date="1998-12" db="EMBL/GenBank/DDBJ databases">
        <authorList>
            <person name="Liu B."/>
            <person name="Liu Y.Q."/>
            <person name="Wang X.Y."/>
            <person name="Zhao B."/>
            <person name="Sheng H."/>
            <person name="Zhao X.W."/>
            <person name="Liu S."/>
            <person name="Xu Y.Y."/>
            <person name="Ye J."/>
            <person name="Song L."/>
            <person name="Gao Y."/>
            <person name="Zhang C.L."/>
            <person name="Zhang J."/>
            <person name="Wei Y.J."/>
            <person name="Cao H.Q."/>
            <person name="Zhao Y."/>
            <person name="Liu L.S."/>
            <person name="Ding J.F."/>
            <person name="Gao R.L."/>
            <person name="Wu Q.Y."/>
            <person name="Qiang B.Q."/>
            <person name="Yuan J.G."/>
            <person name="Liew C.C."/>
            <person name="Zhao M.S."/>
            <person name="Hui R.T."/>
        </authorList>
    </citation>
    <scope>NUCLEOTIDE SEQUENCE [LARGE SCALE MRNA] (ISOFORM 1)</scope>
    <source>
        <tissue>Aorta</tissue>
    </source>
</reference>
<reference key="6">
    <citation type="journal article" date="2003" name="Genome Res.">
        <title>The secreted protein discovery initiative (SPDI), a large-scale effort to identify novel human secreted and transmembrane proteins: a bioinformatics assessment.</title>
        <authorList>
            <person name="Clark H.F."/>
            <person name="Gurney A.L."/>
            <person name="Abaya E."/>
            <person name="Baker K."/>
            <person name="Baldwin D.T."/>
            <person name="Brush J."/>
            <person name="Chen J."/>
            <person name="Chow B."/>
            <person name="Chui C."/>
            <person name="Crowley C."/>
            <person name="Currell B."/>
            <person name="Deuel B."/>
            <person name="Dowd P."/>
            <person name="Eaton D."/>
            <person name="Foster J.S."/>
            <person name="Grimaldi C."/>
            <person name="Gu Q."/>
            <person name="Hass P.E."/>
            <person name="Heldens S."/>
            <person name="Huang A."/>
            <person name="Kim H.S."/>
            <person name="Klimowski L."/>
            <person name="Jin Y."/>
            <person name="Johnson S."/>
            <person name="Lee J."/>
            <person name="Lewis L."/>
            <person name="Liao D."/>
            <person name="Mark M.R."/>
            <person name="Robbie E."/>
            <person name="Sanchez C."/>
            <person name="Schoenfeld J."/>
            <person name="Seshagiri S."/>
            <person name="Simmons L."/>
            <person name="Singh J."/>
            <person name="Smith V."/>
            <person name="Stinson J."/>
            <person name="Vagts A."/>
            <person name="Vandlen R.L."/>
            <person name="Watanabe C."/>
            <person name="Wieand D."/>
            <person name="Woods K."/>
            <person name="Xie M.-H."/>
            <person name="Yansura D.G."/>
            <person name="Yi S."/>
            <person name="Yu G."/>
            <person name="Yuan J."/>
            <person name="Zhang M."/>
            <person name="Zhang Z."/>
            <person name="Goddard A.D."/>
            <person name="Wood W.I."/>
            <person name="Godowski P.J."/>
            <person name="Gray A.M."/>
        </authorList>
    </citation>
    <scope>NUCLEOTIDE SEQUENCE [LARGE SCALE MRNA] (ISOFORM 2)</scope>
</reference>
<reference key="7">
    <citation type="journal article" date="2004" name="Nat. Genet.">
        <title>Complete sequencing and characterization of 21,243 full-length human cDNAs.</title>
        <authorList>
            <person name="Ota T."/>
            <person name="Suzuki Y."/>
            <person name="Nishikawa T."/>
            <person name="Otsuki T."/>
            <person name="Sugiyama T."/>
            <person name="Irie R."/>
            <person name="Wakamatsu A."/>
            <person name="Hayashi K."/>
            <person name="Sato H."/>
            <person name="Nagai K."/>
            <person name="Kimura K."/>
            <person name="Makita H."/>
            <person name="Sekine M."/>
            <person name="Obayashi M."/>
            <person name="Nishi T."/>
            <person name="Shibahara T."/>
            <person name="Tanaka T."/>
            <person name="Ishii S."/>
            <person name="Yamamoto J."/>
            <person name="Saito K."/>
            <person name="Kawai Y."/>
            <person name="Isono Y."/>
            <person name="Nakamura Y."/>
            <person name="Nagahari K."/>
            <person name="Murakami K."/>
            <person name="Yasuda T."/>
            <person name="Iwayanagi T."/>
            <person name="Wagatsuma M."/>
            <person name="Shiratori A."/>
            <person name="Sudo H."/>
            <person name="Hosoiri T."/>
            <person name="Kaku Y."/>
            <person name="Kodaira H."/>
            <person name="Kondo H."/>
            <person name="Sugawara M."/>
            <person name="Takahashi M."/>
            <person name="Kanda K."/>
            <person name="Yokoi T."/>
            <person name="Furuya T."/>
            <person name="Kikkawa E."/>
            <person name="Omura Y."/>
            <person name="Abe K."/>
            <person name="Kamihara K."/>
            <person name="Katsuta N."/>
            <person name="Sato K."/>
            <person name="Tanikawa M."/>
            <person name="Yamazaki M."/>
            <person name="Ninomiya K."/>
            <person name="Ishibashi T."/>
            <person name="Yamashita H."/>
            <person name="Murakawa K."/>
            <person name="Fujimori K."/>
            <person name="Tanai H."/>
            <person name="Kimata M."/>
            <person name="Watanabe M."/>
            <person name="Hiraoka S."/>
            <person name="Chiba Y."/>
            <person name="Ishida S."/>
            <person name="Ono Y."/>
            <person name="Takiguchi S."/>
            <person name="Watanabe S."/>
            <person name="Yosida M."/>
            <person name="Hotuta T."/>
            <person name="Kusano J."/>
            <person name="Kanehori K."/>
            <person name="Takahashi-Fujii A."/>
            <person name="Hara H."/>
            <person name="Tanase T.-O."/>
            <person name="Nomura Y."/>
            <person name="Togiya S."/>
            <person name="Komai F."/>
            <person name="Hara R."/>
            <person name="Takeuchi K."/>
            <person name="Arita M."/>
            <person name="Imose N."/>
            <person name="Musashino K."/>
            <person name="Yuuki H."/>
            <person name="Oshima A."/>
            <person name="Sasaki N."/>
            <person name="Aotsuka S."/>
            <person name="Yoshikawa Y."/>
            <person name="Matsunawa H."/>
            <person name="Ichihara T."/>
            <person name="Shiohata N."/>
            <person name="Sano S."/>
            <person name="Moriya S."/>
            <person name="Momiyama H."/>
            <person name="Satoh N."/>
            <person name="Takami S."/>
            <person name="Terashima Y."/>
            <person name="Suzuki O."/>
            <person name="Nakagawa S."/>
            <person name="Senoh A."/>
            <person name="Mizoguchi H."/>
            <person name="Goto Y."/>
            <person name="Shimizu F."/>
            <person name="Wakebe H."/>
            <person name="Hishigaki H."/>
            <person name="Watanabe T."/>
            <person name="Sugiyama A."/>
            <person name="Takemoto M."/>
            <person name="Kawakami B."/>
            <person name="Yamazaki M."/>
            <person name="Watanabe K."/>
            <person name="Kumagai A."/>
            <person name="Itakura S."/>
            <person name="Fukuzumi Y."/>
            <person name="Fujimori Y."/>
            <person name="Komiyama M."/>
            <person name="Tashiro H."/>
            <person name="Tanigami A."/>
            <person name="Fujiwara T."/>
            <person name="Ono T."/>
            <person name="Yamada K."/>
            <person name="Fujii Y."/>
            <person name="Ozaki K."/>
            <person name="Hirao M."/>
            <person name="Ohmori Y."/>
            <person name="Kawabata A."/>
            <person name="Hikiji T."/>
            <person name="Kobatake N."/>
            <person name="Inagaki H."/>
            <person name="Ikema Y."/>
            <person name="Okamoto S."/>
            <person name="Okitani R."/>
            <person name="Kawakami T."/>
            <person name="Noguchi S."/>
            <person name="Itoh T."/>
            <person name="Shigeta K."/>
            <person name="Senba T."/>
            <person name="Matsumura K."/>
            <person name="Nakajima Y."/>
            <person name="Mizuno T."/>
            <person name="Morinaga M."/>
            <person name="Sasaki M."/>
            <person name="Togashi T."/>
            <person name="Oyama M."/>
            <person name="Hata H."/>
            <person name="Watanabe M."/>
            <person name="Komatsu T."/>
            <person name="Mizushima-Sugano J."/>
            <person name="Satoh T."/>
            <person name="Shirai Y."/>
            <person name="Takahashi Y."/>
            <person name="Nakagawa K."/>
            <person name="Okumura K."/>
            <person name="Nagase T."/>
            <person name="Nomura N."/>
            <person name="Kikuchi H."/>
            <person name="Masuho Y."/>
            <person name="Yamashita R."/>
            <person name="Nakai K."/>
            <person name="Yada T."/>
            <person name="Nakamura Y."/>
            <person name="Ohara O."/>
            <person name="Isogai T."/>
            <person name="Sugano S."/>
        </authorList>
    </citation>
    <scope>NUCLEOTIDE SEQUENCE [LARGE SCALE MRNA] (ISOFORM 1)</scope>
    <source>
        <tissue>Trachea</tissue>
    </source>
</reference>
<reference key="8">
    <citation type="submission" date="2005-07" db="EMBL/GenBank/DDBJ databases">
        <authorList>
            <person name="Mural R.J."/>
            <person name="Istrail S."/>
            <person name="Sutton G.G."/>
            <person name="Florea L."/>
            <person name="Halpern A.L."/>
            <person name="Mobarry C.M."/>
            <person name="Lippert R."/>
            <person name="Walenz B."/>
            <person name="Shatkay H."/>
            <person name="Dew I."/>
            <person name="Miller J.R."/>
            <person name="Flanigan M.J."/>
            <person name="Edwards N.J."/>
            <person name="Bolanos R."/>
            <person name="Fasulo D."/>
            <person name="Halldorsson B.V."/>
            <person name="Hannenhalli S."/>
            <person name="Turner R."/>
            <person name="Yooseph S."/>
            <person name="Lu F."/>
            <person name="Nusskern D.R."/>
            <person name="Shue B.C."/>
            <person name="Zheng X.H."/>
            <person name="Zhong F."/>
            <person name="Delcher A.L."/>
            <person name="Huson D.H."/>
            <person name="Kravitz S.A."/>
            <person name="Mouchard L."/>
            <person name="Reinert K."/>
            <person name="Remington K.A."/>
            <person name="Clark A.G."/>
            <person name="Waterman M.S."/>
            <person name="Eichler E.E."/>
            <person name="Adams M.D."/>
            <person name="Hunkapiller M.W."/>
            <person name="Myers E.W."/>
            <person name="Venter J.C."/>
        </authorList>
    </citation>
    <scope>NUCLEOTIDE SEQUENCE [LARGE SCALE GENOMIC DNA]</scope>
</reference>
<reference key="9">
    <citation type="journal article" date="2004" name="Genome Res.">
        <title>The status, quality, and expansion of the NIH full-length cDNA project: the Mammalian Gene Collection (MGC).</title>
        <authorList>
            <consortium name="The MGC Project Team"/>
        </authorList>
    </citation>
    <scope>NUCLEOTIDE SEQUENCE [LARGE SCALE MRNA] (ISOFORM 2)</scope>
    <source>
        <tissue>Testis</tissue>
    </source>
</reference>
<reference key="10">
    <citation type="journal article" date="2002" name="Kidney Int.">
        <title>Platelet-derived growth factor-D expression in developing and mature human kidneys.</title>
        <authorList>
            <person name="Changsirikulchai S."/>
            <person name="Hudkins K.L."/>
            <person name="Goodpaster T.A."/>
            <person name="Volpone J."/>
            <person name="Topouzis S."/>
            <person name="Gilbertson D.G."/>
            <person name="Alpers C.E."/>
        </authorList>
    </citation>
    <scope>NUCLEOTIDE SEQUENCE [MRNA] OF 64-369</scope>
    <scope>TISSUE SPECIFICITY</scope>
    <scope>DEVELOPMENTAL STAGE</scope>
</reference>
<reference key="11">
    <citation type="journal article" date="2001" name="Circulation">
        <title>Chromosomal location, exon structure, and vascular expression patterns of the human PDGFC and PDGFC genes.</title>
        <authorList>
            <person name="Uutela M."/>
            <person name="Lauren J."/>
            <person name="Bergsten E."/>
            <person name="Li X."/>
            <person name="Horelli-Kuitunen N."/>
            <person name="Eriksson U."/>
            <person name="Alitalo K."/>
        </authorList>
    </citation>
    <scope>TISSUE SPECIFICITY</scope>
</reference>
<reference key="12">
    <citation type="journal article" date="2002" name="Cancer Res.">
        <title>Platelet-derived growth factor D: tumorigenicity in mice and dysregulated expression in human cancer.</title>
        <authorList>
            <person name="LaRochelle W.J."/>
            <person name="Jeffers M."/>
            <person name="Corvalan J.R.F."/>
            <person name="Jia X.-C."/>
            <person name="Feng X."/>
            <person name="Vanegas S."/>
            <person name="Vickroy J.D."/>
            <person name="Yang X.-D."/>
            <person name="Chen F."/>
            <person name="Gazit G."/>
            <person name="Mayotte J."/>
            <person name="Macaluso J."/>
            <person name="Rittman B."/>
            <person name="Wu F."/>
            <person name="Dhanabal M."/>
            <person name="Herrmann J."/>
            <person name="Lichenstein H.S."/>
        </authorList>
    </citation>
    <scope>TISSUE SPECIFICITY</scope>
</reference>
<reference key="13">
    <citation type="journal article" date="2003" name="J. Am. Soc. Nephrol.">
        <title>Obstructive uropathy in mice and humans: potential role for PDGF-D in the progression of tubulointerstitial injury.</title>
        <authorList>
            <person name="Taneda S."/>
            <person name="Hudkins K.L."/>
            <person name="Topouzis S."/>
            <person name="Gilbertson D.G."/>
            <person name="Ophascharoensuk V."/>
            <person name="Truong L."/>
            <person name="Johnson R.J."/>
            <person name="Alpers C.E."/>
        </authorList>
    </citation>
    <scope>TISSUE SPECIFICITY</scope>
</reference>
<reference key="14">
    <citation type="journal article" date="2004" name="Blood">
        <title>PDGF-D induces macrophage recruitment, increased interstitial pressure, and blood vessel maturation during angiogenesis.</title>
        <authorList>
            <person name="Uutela M."/>
            <person name="Wirzenius M."/>
            <person name="Paavonen K."/>
            <person name="Rajantie I."/>
            <person name="He Y."/>
            <person name="Karpanen T."/>
            <person name="Lohela M."/>
            <person name="Wiig H."/>
            <person name="Salven P."/>
            <person name="Pajusola K."/>
            <person name="Eriksson U."/>
            <person name="Alitalo K."/>
        </authorList>
    </citation>
    <scope>FUNCTION</scope>
</reference>
<reference key="15">
    <citation type="journal article" date="2005" name="FEBS J.">
        <title>Structural and functional specificities of PDGF-C and PDGF-D, the novel members of the platelet-derived growth factors family.</title>
        <authorList>
            <person name="Reigstad L.J."/>
            <person name="Varhaug J.E."/>
            <person name="Lillehaug J.R."/>
        </authorList>
    </citation>
    <scope>REVIEW</scope>
</reference>
<reference key="16">
    <citation type="journal article" date="2005" name="Mol. Cell. Biol.">
        <title>Platelet-derived growth factor D is activated by urokinase plasminogen activator in prostate carcinoma cells.</title>
        <authorList>
            <person name="Ustach C.V."/>
            <person name="Kim H.-R.C."/>
        </authorList>
    </citation>
    <scope>TISSUE SPECIFICITY</scope>
    <scope>PTM</scope>
    <scope>MUTAGENESIS OF ARG-247 AND ARG-249</scope>
</reference>
<reference key="17">
    <citation type="journal article" date="2010" name="Biochim. Biophys. Acta">
        <title>Emerging roles of PDGF-D signaling pathway in tumor development and progression.</title>
        <authorList>
            <person name="Wang Z."/>
            <person name="Ahmad A."/>
            <person name="Li Y."/>
            <person name="Kong D."/>
            <person name="Azmi A.S."/>
            <person name="Banerjee S."/>
            <person name="Sarkar F.H."/>
        </authorList>
    </citation>
    <scope>REVIEW</scope>
</reference>
<reference key="18">
    <citation type="journal article" date="2006" name="Science">
        <title>The consensus coding sequences of human breast and colorectal cancers.</title>
        <authorList>
            <person name="Sjoeblom T."/>
            <person name="Jones S."/>
            <person name="Wood L.D."/>
            <person name="Parsons D.W."/>
            <person name="Lin J."/>
            <person name="Barber T.D."/>
            <person name="Mandelker D."/>
            <person name="Leary R.J."/>
            <person name="Ptak J."/>
            <person name="Silliman N."/>
            <person name="Szabo S."/>
            <person name="Buckhaults P."/>
            <person name="Farrell C."/>
            <person name="Meeh P."/>
            <person name="Markowitz S.D."/>
            <person name="Willis J."/>
            <person name="Dawson D."/>
            <person name="Willson J.K.V."/>
            <person name="Gazdar A.F."/>
            <person name="Hartigan J."/>
            <person name="Wu L."/>
            <person name="Liu C."/>
            <person name="Parmigiani G."/>
            <person name="Park B.H."/>
            <person name="Bachman K.E."/>
            <person name="Papadopoulos N."/>
            <person name="Vogelstein B."/>
            <person name="Kinzler K.W."/>
            <person name="Velculescu V.E."/>
        </authorList>
    </citation>
    <scope>VARIANT [LARGE SCALE ANALYSIS] TYR-202</scope>
</reference>
<proteinExistence type="evidence at protein level"/>
<organism>
    <name type="scientific">Homo sapiens</name>
    <name type="common">Human</name>
    <dbReference type="NCBI Taxonomy" id="9606"/>
    <lineage>
        <taxon>Eukaryota</taxon>
        <taxon>Metazoa</taxon>
        <taxon>Chordata</taxon>
        <taxon>Craniata</taxon>
        <taxon>Vertebrata</taxon>
        <taxon>Euteleostomi</taxon>
        <taxon>Mammalia</taxon>
        <taxon>Eutheria</taxon>
        <taxon>Euarchontoglires</taxon>
        <taxon>Primates</taxon>
        <taxon>Haplorrhini</taxon>
        <taxon>Catarrhini</taxon>
        <taxon>Hominidae</taxon>
        <taxon>Homo</taxon>
    </lineage>
</organism>
<accession>Q9GZP0</accession>
<accession>A8K9T6</accession>
<accession>Q9BWV5</accession>
<protein>
    <recommendedName>
        <fullName>Platelet-derived growth factor D</fullName>
        <shortName>PDGF-D</shortName>
    </recommendedName>
    <alternativeName>
        <fullName>Iris-expressed growth factor</fullName>
    </alternativeName>
    <alternativeName>
        <fullName>Spinal cord-derived growth factor B</fullName>
        <shortName>SCDGF-B</shortName>
    </alternativeName>
    <component>
        <recommendedName>
            <fullName>Platelet-derived growth factor D, latent form</fullName>
            <shortName>PDGFD latent form</shortName>
        </recommendedName>
    </component>
    <component>
        <recommendedName>
            <fullName>Platelet-derived growth factor D, receptor-binding form</fullName>
            <shortName>PDGFD receptor-binding form</shortName>
        </recommendedName>
    </component>
</protein>
<keyword id="KW-0025">Alternative splicing</keyword>
<keyword id="KW-0165">Cleavage on pair of basic residues</keyword>
<keyword id="KW-0217">Developmental protein</keyword>
<keyword id="KW-1015">Disulfide bond</keyword>
<keyword id="KW-0325">Glycoprotein</keyword>
<keyword id="KW-0339">Growth factor</keyword>
<keyword id="KW-0497">Mitogen</keyword>
<keyword id="KW-1267">Proteomics identification</keyword>
<keyword id="KW-0656">Proto-oncogene</keyword>
<keyword id="KW-1185">Reference proteome</keyword>
<keyword id="KW-0964">Secreted</keyword>
<keyword id="KW-0732">Signal</keyword>
<comment type="function">
    <text evidence="1 4 10">Growth factor that plays an essential role in the regulation of embryonic development, cell proliferation, cell migration, survival and chemotaxis. Potent mitogen for cells of mesenchymal origin. Plays an important role in wound healing. Induces macrophage recruitment, increased interstitial pressure, and blood vessel maturation during angiogenesis. Can initiate events that lead to a mesangial proliferative glomerulonephritis, including influx of monocytes and macrophages and production of extracellular matrix (By similarity).</text>
</comment>
<comment type="subunit">
    <text evidence="4 5">Homodimer; disulfide-linked. Interacts with PDGFRB homodimers, and with heterodimers formed by PDGFRA and PDGFRB.</text>
</comment>
<comment type="subcellular location">
    <subcellularLocation>
        <location evidence="5">Secreted</location>
    </subcellularLocation>
    <text>Released by platelets upon wounding.</text>
</comment>
<comment type="alternative products">
    <event type="alternative splicing"/>
    <isoform>
        <id>Q9GZP0-1</id>
        <name>1</name>
        <name>Long</name>
        <name>SCDGF-B-L</name>
        <sequence type="displayed"/>
    </isoform>
    <isoform>
        <id>Q9GZP0-2</id>
        <name>2</name>
        <name>Short</name>
        <name>SCDGF-B-S</name>
        <sequence type="described" ref="VSP_020615"/>
    </isoform>
</comment>
<comment type="tissue specificity">
    <text evidence="4 5 6 7 8 9 11">Expressed at high levels in the heart, pancreas, adrenal gland and ovary and at low levels in placenta, liver, kidney, prostate, testis, small intestine, spleen and colon. In the kidney, expressed by the visceral epithelial cells of the glomeruli. A widespread expression is also seen in the medial smooth muscle cells of arteries and arterioles, as well as in smooth muscle cells of vasa rectae in the medullary area. Expressed in the adventitial connective tissue surrounding the suprarenal artery. In chronic obstructive nephropathy, a persistent expression is seen in glomerular visceral epithelial cells and vascular smooth muscle cells, as well as de novo expression by periglomerular interstitial cells and by some neointimal cells of atherosclerotic vessels. Expression in normal prostate is seen preferentially in the mesenchyme of the gland while expression is increased and more profuse in prostate carcinoma. Expressed in many ovarian, lung, renal and brain cancer-derived cell lines.</text>
</comment>
<comment type="developmental stage">
    <text evidence="8">Not detectable in the earliest stages of glomerulogenesis, and not detected in the metanephric blastema or surrounding cortical interstitial cells. In later stages of glomerulogenesis, localized to epithelial cells transitioning from the early developing nephrons of the comma- and S-shaped stages to the visceral epithelial cells of differentiated glomeruli. In the developing pelvis, expressed at the basement membrane of immature collecting ducts and by presumptive fibroblastic cells in the interstitium.</text>
</comment>
<comment type="PTM">
    <text>Activated by proteolytic cleavage. Proteolytic removal of the N-terminal CUB domain releasing the core domain is necessary for unmasking the receptor-binding epitopes of the core domain. Cleavage after Arg-247 or Arg-249 by urokinase plasminogen activator gives rise to the active form.</text>
</comment>
<comment type="similarity">
    <text evidence="17">Belongs to the PDGF/VEGF growth factor family.</text>
</comment>
<name>PDGFD_HUMAN</name>
<evidence type="ECO:0000250" key="1"/>
<evidence type="ECO:0000255" key="2"/>
<evidence type="ECO:0000255" key="3">
    <source>
        <dbReference type="PROSITE-ProRule" id="PRU00059"/>
    </source>
</evidence>
<evidence type="ECO:0000269" key="4">
    <source>
    </source>
</evidence>
<evidence type="ECO:0000269" key="5">
    <source>
    </source>
</evidence>
<evidence type="ECO:0000269" key="6">
    <source>
    </source>
</evidence>
<evidence type="ECO:0000269" key="7">
    <source>
    </source>
</evidence>
<evidence type="ECO:0000269" key="8">
    <source>
    </source>
</evidence>
<evidence type="ECO:0000269" key="9">
    <source>
    </source>
</evidence>
<evidence type="ECO:0000269" key="10">
    <source>
    </source>
</evidence>
<evidence type="ECO:0000269" key="11">
    <source>
    </source>
</evidence>
<evidence type="ECO:0000269" key="12">
    <source>
    </source>
</evidence>
<evidence type="ECO:0000303" key="13">
    <source>
    </source>
</evidence>
<evidence type="ECO:0000303" key="14">
    <source>
    </source>
</evidence>
<evidence type="ECO:0000303" key="15">
    <source>
    </source>
</evidence>
<evidence type="ECO:0000303" key="16">
    <source>
    </source>
</evidence>
<evidence type="ECO:0000305" key="17"/>
<dbReference type="EMBL" id="AB033832">
    <property type="protein sequence ID" value="BAB18903.1"/>
    <property type="molecule type" value="mRNA"/>
</dbReference>
<dbReference type="EMBL" id="AF336376">
    <property type="protein sequence ID" value="AAK56136.1"/>
    <property type="molecule type" value="mRNA"/>
</dbReference>
<dbReference type="EMBL" id="AF335584">
    <property type="protein sequence ID" value="AAK38840.1"/>
    <property type="molecule type" value="mRNA"/>
</dbReference>
<dbReference type="EMBL" id="AY027517">
    <property type="protein sequence ID" value="AAK20081.1"/>
    <property type="molecule type" value="mRNA"/>
</dbReference>
<dbReference type="EMBL" id="AY027518">
    <property type="protein sequence ID" value="AAK20082.1"/>
    <property type="molecule type" value="mRNA"/>
</dbReference>
<dbReference type="EMBL" id="AF113216">
    <property type="protein sequence ID" value="AAG39287.1"/>
    <property type="molecule type" value="mRNA"/>
</dbReference>
<dbReference type="EMBL" id="AY359116">
    <property type="protein sequence ID" value="AAQ89474.1"/>
    <property type="molecule type" value="mRNA"/>
</dbReference>
<dbReference type="EMBL" id="AK292801">
    <property type="protein sequence ID" value="BAF85490.1"/>
    <property type="molecule type" value="mRNA"/>
</dbReference>
<dbReference type="EMBL" id="CH471065">
    <property type="protein sequence ID" value="EAW67045.1"/>
    <property type="molecule type" value="Genomic_DNA"/>
</dbReference>
<dbReference type="EMBL" id="BC030645">
    <property type="protein sequence ID" value="AAH30645.1"/>
    <property type="molecule type" value="mRNA"/>
</dbReference>
<dbReference type="CCDS" id="CCDS41703.1">
    <molecule id="Q9GZP0-1"/>
</dbReference>
<dbReference type="CCDS" id="CCDS8326.1">
    <molecule id="Q9GZP0-2"/>
</dbReference>
<dbReference type="PIR" id="JC7591">
    <property type="entry name" value="JC7591"/>
</dbReference>
<dbReference type="RefSeq" id="NP_079484.1">
    <molecule id="Q9GZP0-1"/>
    <property type="nucleotide sequence ID" value="NM_025208.5"/>
</dbReference>
<dbReference type="RefSeq" id="NP_149126.1">
    <molecule id="Q9GZP0-2"/>
    <property type="nucleotide sequence ID" value="NM_033135.4"/>
</dbReference>
<dbReference type="SMR" id="Q9GZP0"/>
<dbReference type="BioGRID" id="123223">
    <property type="interactions" value="22"/>
</dbReference>
<dbReference type="ComplexPortal" id="CPX-2880">
    <property type="entry name" value="Platelet-derived growth factor DD complex"/>
</dbReference>
<dbReference type="ComplexPortal" id="CPX-2889">
    <property type="entry name" value="PDGF receptor beta - PDGF-DD complex"/>
</dbReference>
<dbReference type="ComplexPortal" id="CPX-2890">
    <property type="entry name" value="PDGF receptor alpha-beta - PDGF-DD complex"/>
</dbReference>
<dbReference type="FunCoup" id="Q9GZP0">
    <property type="interactions" value="1218"/>
</dbReference>
<dbReference type="IntAct" id="Q9GZP0">
    <property type="interactions" value="23"/>
</dbReference>
<dbReference type="MINT" id="Q9GZP0"/>
<dbReference type="STRING" id="9606.ENSP00000376865"/>
<dbReference type="DrugBank" id="DB05139">
    <property type="generic name" value="CR002"/>
</dbReference>
<dbReference type="DrugBank" id="DB05465">
    <property type="generic name" value="Tandutinib"/>
</dbReference>
<dbReference type="GlyCosmos" id="Q9GZP0">
    <property type="glycosylation" value="5 sites, 3 glycans"/>
</dbReference>
<dbReference type="GlyGen" id="Q9GZP0">
    <property type="glycosylation" value="5 sites, 1 N-linked glycan (1 site), 3 O-linked glycans (4 sites)"/>
</dbReference>
<dbReference type="iPTMnet" id="Q9GZP0"/>
<dbReference type="PhosphoSitePlus" id="Q9GZP0"/>
<dbReference type="BioMuta" id="PDGFD"/>
<dbReference type="DMDM" id="74717921"/>
<dbReference type="jPOST" id="Q9GZP0"/>
<dbReference type="MassIVE" id="Q9GZP0"/>
<dbReference type="PaxDb" id="9606-ENSP00000376865"/>
<dbReference type="PeptideAtlas" id="Q9GZP0"/>
<dbReference type="ProteomicsDB" id="80102">
    <molecule id="Q9GZP0-1"/>
</dbReference>
<dbReference type="ProteomicsDB" id="80103">
    <molecule id="Q9GZP0-2"/>
</dbReference>
<dbReference type="Antibodypedia" id="31835">
    <property type="antibodies" value="290 antibodies from 27 providers"/>
</dbReference>
<dbReference type="DNASU" id="80310"/>
<dbReference type="Ensembl" id="ENST00000302251.9">
    <molecule id="Q9GZP0-2"/>
    <property type="protein sequence ID" value="ENSP00000302193.5"/>
    <property type="gene ID" value="ENSG00000170962.13"/>
</dbReference>
<dbReference type="Ensembl" id="ENST00000393158.7">
    <molecule id="Q9GZP0-1"/>
    <property type="protein sequence ID" value="ENSP00000376865.2"/>
    <property type="gene ID" value="ENSG00000170962.13"/>
</dbReference>
<dbReference type="GeneID" id="80310"/>
<dbReference type="KEGG" id="hsa:80310"/>
<dbReference type="MANE-Select" id="ENST00000393158.7">
    <property type="protein sequence ID" value="ENSP00000376865.2"/>
    <property type="RefSeq nucleotide sequence ID" value="NM_025208.5"/>
    <property type="RefSeq protein sequence ID" value="NP_079484.1"/>
</dbReference>
<dbReference type="UCSC" id="uc001php.4">
    <molecule id="Q9GZP0-1"/>
    <property type="organism name" value="human"/>
</dbReference>
<dbReference type="AGR" id="HGNC:30620"/>
<dbReference type="CTD" id="80310"/>
<dbReference type="DisGeNET" id="80310"/>
<dbReference type="GeneCards" id="PDGFD"/>
<dbReference type="HGNC" id="HGNC:30620">
    <property type="gene designation" value="PDGFD"/>
</dbReference>
<dbReference type="HPA" id="ENSG00000170962">
    <property type="expression patterns" value="Tissue enhanced (adrenal)"/>
</dbReference>
<dbReference type="MIM" id="609673">
    <property type="type" value="gene"/>
</dbReference>
<dbReference type="neXtProt" id="NX_Q9GZP0"/>
<dbReference type="OpenTargets" id="ENSG00000170962"/>
<dbReference type="PharmGKB" id="PA134892327"/>
<dbReference type="VEuPathDB" id="HostDB:ENSG00000170962"/>
<dbReference type="eggNOG" id="ENOG502QPQY">
    <property type="taxonomic scope" value="Eukaryota"/>
</dbReference>
<dbReference type="GeneTree" id="ENSGT00940000159575"/>
<dbReference type="HOGENOM" id="CLU_037859_1_0_1"/>
<dbReference type="InParanoid" id="Q9GZP0"/>
<dbReference type="OMA" id="HHETCEC"/>
<dbReference type="OrthoDB" id="8641091at2759"/>
<dbReference type="PAN-GO" id="Q9GZP0">
    <property type="GO annotations" value="9 GO annotations based on evolutionary models"/>
</dbReference>
<dbReference type="PhylomeDB" id="Q9GZP0"/>
<dbReference type="TreeFam" id="TF332130"/>
<dbReference type="PathwayCommons" id="Q9GZP0"/>
<dbReference type="Reactome" id="R-HSA-186797">
    <property type="pathway name" value="Signaling by PDGF"/>
</dbReference>
<dbReference type="SignaLink" id="Q9GZP0"/>
<dbReference type="BioGRID-ORCS" id="80310">
    <property type="hits" value="11 hits in 1150 CRISPR screens"/>
</dbReference>
<dbReference type="ChiTaRS" id="PDGFD">
    <property type="organism name" value="human"/>
</dbReference>
<dbReference type="GeneWiki" id="PDGFD"/>
<dbReference type="GenomeRNAi" id="80310"/>
<dbReference type="Pharos" id="Q9GZP0">
    <property type="development level" value="Tbio"/>
</dbReference>
<dbReference type="PRO" id="PR:Q9GZP0"/>
<dbReference type="Proteomes" id="UP000005640">
    <property type="component" value="Chromosome 11"/>
</dbReference>
<dbReference type="RNAct" id="Q9GZP0">
    <property type="molecule type" value="protein"/>
</dbReference>
<dbReference type="Bgee" id="ENSG00000170962">
    <property type="expression patterns" value="Expressed in periodontal ligament and 171 other cell types or tissues"/>
</dbReference>
<dbReference type="ExpressionAtlas" id="Q9GZP0">
    <property type="expression patterns" value="baseline and differential"/>
</dbReference>
<dbReference type="GO" id="GO:0005788">
    <property type="term" value="C:endoplasmic reticulum lumen"/>
    <property type="evidence" value="ECO:0000304"/>
    <property type="project" value="Reactome"/>
</dbReference>
<dbReference type="GO" id="GO:0005576">
    <property type="term" value="C:extracellular region"/>
    <property type="evidence" value="ECO:0000304"/>
    <property type="project" value="Reactome"/>
</dbReference>
<dbReference type="GO" id="GO:0005615">
    <property type="term" value="C:extracellular space"/>
    <property type="evidence" value="ECO:0000318"/>
    <property type="project" value="GO_Central"/>
</dbReference>
<dbReference type="GO" id="GO:0000139">
    <property type="term" value="C:Golgi membrane"/>
    <property type="evidence" value="ECO:0000304"/>
    <property type="project" value="Reactome"/>
</dbReference>
<dbReference type="GO" id="GO:0008083">
    <property type="term" value="F:growth factor activity"/>
    <property type="evidence" value="ECO:0007669"/>
    <property type="project" value="UniProtKB-KW"/>
</dbReference>
<dbReference type="GO" id="GO:0005161">
    <property type="term" value="F:platelet-derived growth factor receptor binding"/>
    <property type="evidence" value="ECO:0000318"/>
    <property type="project" value="GO_Central"/>
</dbReference>
<dbReference type="GO" id="GO:0071230">
    <property type="term" value="P:cellular response to amino acid stimulus"/>
    <property type="evidence" value="ECO:0007669"/>
    <property type="project" value="Ensembl"/>
</dbReference>
<dbReference type="GO" id="GO:0070301">
    <property type="term" value="P:cellular response to hydrogen peroxide"/>
    <property type="evidence" value="ECO:0007669"/>
    <property type="project" value="Ensembl"/>
</dbReference>
<dbReference type="GO" id="GO:0036120">
    <property type="term" value="P:cellular response to platelet-derived growth factor stimulus"/>
    <property type="evidence" value="ECO:0007669"/>
    <property type="project" value="Ensembl"/>
</dbReference>
<dbReference type="GO" id="GO:0071560">
    <property type="term" value="P:cellular response to transforming growth factor beta stimulus"/>
    <property type="evidence" value="ECO:0007669"/>
    <property type="project" value="Ensembl"/>
</dbReference>
<dbReference type="GO" id="GO:0048008">
    <property type="term" value="P:platelet-derived growth factor receptor signaling pathway"/>
    <property type="evidence" value="ECO:0000318"/>
    <property type="project" value="GO_Central"/>
</dbReference>
<dbReference type="GO" id="GO:0051781">
    <property type="term" value="P:positive regulation of cell division"/>
    <property type="evidence" value="ECO:0007669"/>
    <property type="project" value="UniProtKB-KW"/>
</dbReference>
<dbReference type="GO" id="GO:0030335">
    <property type="term" value="P:positive regulation of cell migration"/>
    <property type="evidence" value="ECO:0000318"/>
    <property type="project" value="GO_Central"/>
</dbReference>
<dbReference type="GO" id="GO:0008284">
    <property type="term" value="P:positive regulation of cell population proliferation"/>
    <property type="evidence" value="ECO:0000318"/>
    <property type="project" value="GO_Central"/>
</dbReference>
<dbReference type="GO" id="GO:0070374">
    <property type="term" value="P:positive regulation of ERK1 and ERK2 cascade"/>
    <property type="evidence" value="ECO:0000318"/>
    <property type="project" value="GO_Central"/>
</dbReference>
<dbReference type="GO" id="GO:0048146">
    <property type="term" value="P:positive regulation of fibroblast proliferation"/>
    <property type="evidence" value="ECO:0007669"/>
    <property type="project" value="Ensembl"/>
</dbReference>
<dbReference type="GO" id="GO:0072126">
    <property type="term" value="P:positive regulation of glomerular mesangial cell proliferation"/>
    <property type="evidence" value="ECO:0007669"/>
    <property type="project" value="Ensembl"/>
</dbReference>
<dbReference type="GO" id="GO:2000439">
    <property type="term" value="P:positive regulation of monocyte extravasation"/>
    <property type="evidence" value="ECO:0007669"/>
    <property type="project" value="Ensembl"/>
</dbReference>
<dbReference type="GO" id="GO:0051897">
    <property type="term" value="P:positive regulation of phosphatidylinositol 3-kinase/protein kinase B signal transduction"/>
    <property type="evidence" value="ECO:0000318"/>
    <property type="project" value="GO_Central"/>
</dbReference>
<dbReference type="GO" id="GO:0071673">
    <property type="term" value="P:positive regulation of smooth muscle cell chemotaxis"/>
    <property type="evidence" value="ECO:0007669"/>
    <property type="project" value="Ensembl"/>
</dbReference>
<dbReference type="GO" id="GO:0048661">
    <property type="term" value="P:positive regulation of smooth muscle cell proliferation"/>
    <property type="evidence" value="ECO:0007669"/>
    <property type="project" value="Ensembl"/>
</dbReference>
<dbReference type="CDD" id="cd00041">
    <property type="entry name" value="CUB"/>
    <property type="match status" value="1"/>
</dbReference>
<dbReference type="CDD" id="cd00135">
    <property type="entry name" value="PDGF"/>
    <property type="match status" value="1"/>
</dbReference>
<dbReference type="FunFam" id="2.10.90.10:FF:000010">
    <property type="entry name" value="Platelet derived growth factor C"/>
    <property type="match status" value="1"/>
</dbReference>
<dbReference type="FunFam" id="2.60.120.290:FF:000017">
    <property type="entry name" value="Platelet derived growth factor C"/>
    <property type="match status" value="1"/>
</dbReference>
<dbReference type="Gene3D" id="2.10.90.10">
    <property type="entry name" value="Cystine-knot cytokines"/>
    <property type="match status" value="1"/>
</dbReference>
<dbReference type="Gene3D" id="2.60.120.290">
    <property type="entry name" value="Spermadhesin, CUB domain"/>
    <property type="match status" value="1"/>
</dbReference>
<dbReference type="InterPro" id="IPR000859">
    <property type="entry name" value="CUB_dom"/>
</dbReference>
<dbReference type="InterPro" id="IPR029034">
    <property type="entry name" value="Cystine-knot_cytokine"/>
</dbReference>
<dbReference type="InterPro" id="IPR000072">
    <property type="entry name" value="PDGF/VEGF_dom"/>
</dbReference>
<dbReference type="InterPro" id="IPR035914">
    <property type="entry name" value="Sperma_CUB_dom_sf"/>
</dbReference>
<dbReference type="PANTHER" id="PTHR11633">
    <property type="entry name" value="PLATELET-DERIVED GROWTH FACTOR"/>
    <property type="match status" value="1"/>
</dbReference>
<dbReference type="PANTHER" id="PTHR11633:SF4">
    <property type="entry name" value="PLATELET-DERIVED GROWTH FACTOR D"/>
    <property type="match status" value="1"/>
</dbReference>
<dbReference type="Pfam" id="PF00431">
    <property type="entry name" value="CUB"/>
    <property type="match status" value="1"/>
</dbReference>
<dbReference type="Pfam" id="PF00341">
    <property type="entry name" value="PDGF"/>
    <property type="match status" value="1"/>
</dbReference>
<dbReference type="SMART" id="SM00042">
    <property type="entry name" value="CUB"/>
    <property type="match status" value="1"/>
</dbReference>
<dbReference type="SUPFAM" id="SSF57501">
    <property type="entry name" value="Cystine-knot cytokines"/>
    <property type="match status" value="1"/>
</dbReference>
<dbReference type="SUPFAM" id="SSF49854">
    <property type="entry name" value="Spermadhesin, CUB domain"/>
    <property type="match status" value="1"/>
</dbReference>
<dbReference type="PROSITE" id="PS01180">
    <property type="entry name" value="CUB"/>
    <property type="match status" value="1"/>
</dbReference>
<dbReference type="PROSITE" id="PS50278">
    <property type="entry name" value="PDGF_2"/>
    <property type="match status" value="1"/>
</dbReference>